<organism>
    <name type="scientific">Pseudomonas fluorescens (strain ATCC BAA-477 / NRRL B-23932 / Pf-5)</name>
    <dbReference type="NCBI Taxonomy" id="220664"/>
    <lineage>
        <taxon>Bacteria</taxon>
        <taxon>Pseudomonadati</taxon>
        <taxon>Pseudomonadota</taxon>
        <taxon>Gammaproteobacteria</taxon>
        <taxon>Pseudomonadales</taxon>
        <taxon>Pseudomonadaceae</taxon>
        <taxon>Pseudomonas</taxon>
    </lineage>
</organism>
<feature type="chain" id="PRO_0000333110" description="Na(+)/H(+) antiporter NhaB">
    <location>
        <begin position="1"/>
        <end position="500"/>
    </location>
</feature>
<feature type="transmembrane region" description="Helical" evidence="1">
    <location>
        <begin position="34"/>
        <end position="54"/>
    </location>
</feature>
<feature type="transmembrane region" description="Helical" evidence="1">
    <location>
        <begin position="62"/>
        <end position="82"/>
    </location>
</feature>
<feature type="transmembrane region" description="Helical" evidence="1">
    <location>
        <begin position="90"/>
        <end position="110"/>
    </location>
</feature>
<feature type="transmembrane region" description="Helical" evidence="1">
    <location>
        <begin position="129"/>
        <end position="149"/>
    </location>
</feature>
<feature type="transmembrane region" description="Helical" evidence="1">
    <location>
        <begin position="150"/>
        <end position="170"/>
    </location>
</feature>
<feature type="transmembrane region" description="Helical" evidence="1">
    <location>
        <begin position="205"/>
        <end position="225"/>
    </location>
</feature>
<feature type="transmembrane region" description="Helical" evidence="1">
    <location>
        <begin position="241"/>
        <end position="261"/>
    </location>
</feature>
<feature type="transmembrane region" description="Helical" evidence="1">
    <location>
        <begin position="311"/>
        <end position="331"/>
    </location>
</feature>
<feature type="transmembrane region" description="Helical" evidence="1">
    <location>
        <begin position="350"/>
        <end position="370"/>
    </location>
</feature>
<feature type="transmembrane region" description="Helical" evidence="1">
    <location>
        <begin position="394"/>
        <end position="414"/>
    </location>
</feature>
<feature type="transmembrane region" description="Helical" evidence="1">
    <location>
        <begin position="449"/>
        <end position="469"/>
    </location>
</feature>
<feature type="transmembrane region" description="Helical" evidence="1">
    <location>
        <begin position="477"/>
        <end position="497"/>
    </location>
</feature>
<reference key="1">
    <citation type="journal article" date="2005" name="Nat. Biotechnol.">
        <title>Complete genome sequence of the plant commensal Pseudomonas fluorescens Pf-5.</title>
        <authorList>
            <person name="Paulsen I.T."/>
            <person name="Press C.M."/>
            <person name="Ravel J."/>
            <person name="Kobayashi D.Y."/>
            <person name="Myers G.S.A."/>
            <person name="Mavrodi D.V."/>
            <person name="DeBoy R.T."/>
            <person name="Seshadri R."/>
            <person name="Ren Q."/>
            <person name="Madupu R."/>
            <person name="Dodson R.J."/>
            <person name="Durkin A.S."/>
            <person name="Brinkac L.M."/>
            <person name="Daugherty S.C."/>
            <person name="Sullivan S.A."/>
            <person name="Rosovitz M.J."/>
            <person name="Gwinn M.L."/>
            <person name="Zhou L."/>
            <person name="Schneider D.J."/>
            <person name="Cartinhour S.W."/>
            <person name="Nelson W.C."/>
            <person name="Weidman J."/>
            <person name="Watkins K."/>
            <person name="Tran K."/>
            <person name="Khouri H."/>
            <person name="Pierson E.A."/>
            <person name="Pierson L.S. III"/>
            <person name="Thomashow L.S."/>
            <person name="Loper J.E."/>
        </authorList>
    </citation>
    <scope>NUCLEOTIDE SEQUENCE [LARGE SCALE GENOMIC DNA]</scope>
    <source>
        <strain>ATCC BAA-477 / NRRL B-23932 / Pf-5</strain>
    </source>
</reference>
<keyword id="KW-0050">Antiport</keyword>
<keyword id="KW-0997">Cell inner membrane</keyword>
<keyword id="KW-1003">Cell membrane</keyword>
<keyword id="KW-0406">Ion transport</keyword>
<keyword id="KW-0472">Membrane</keyword>
<keyword id="KW-0915">Sodium</keyword>
<keyword id="KW-0739">Sodium transport</keyword>
<keyword id="KW-0812">Transmembrane</keyword>
<keyword id="KW-1133">Transmembrane helix</keyword>
<keyword id="KW-0813">Transport</keyword>
<evidence type="ECO:0000255" key="1">
    <source>
        <dbReference type="HAMAP-Rule" id="MF_01599"/>
    </source>
</evidence>
<name>NHAB_PSEF5</name>
<comment type="function">
    <text evidence="1">Na(+)/H(+) antiporter that extrudes sodium in exchange for external protons.</text>
</comment>
<comment type="catalytic activity">
    <reaction evidence="1">
        <text>2 Na(+)(in) + 3 H(+)(out) = 2 Na(+)(out) + 3 H(+)(in)</text>
        <dbReference type="Rhea" id="RHEA:29247"/>
        <dbReference type="ChEBI" id="CHEBI:15378"/>
        <dbReference type="ChEBI" id="CHEBI:29101"/>
    </reaction>
    <physiologicalReaction direction="left-to-right" evidence="1">
        <dbReference type="Rhea" id="RHEA:29248"/>
    </physiologicalReaction>
</comment>
<comment type="subcellular location">
    <subcellularLocation>
        <location evidence="1">Cell inner membrane</location>
        <topology evidence="1">Multi-pass membrane protein</topology>
    </subcellularLocation>
</comment>
<comment type="similarity">
    <text evidence="1">Belongs to the NhaB Na(+)/H(+) (TC 2.A.34) antiporter family.</text>
</comment>
<accession>Q4KBY6</accession>
<sequence>MSGSMAQAFAHNFLGQSPRWYKASIVAFLLLNPPLFFAVSPAAAGWCLVIEFIFTLAMALKCYPLMPGGLLLVQALVLGMTTPQALYDELVHNFPVILLLMFMVAGIYFMKELLLYLFSRLLLGVRSKALLGLLFCFLSAFLSAFLDALTVTAVIISAAVGFYSVYHRVASGNDPRQDSAFADDQQLPALHHDDLEQFRAFLRSLLMHGAVGTALGGVCTLVGEPQNLLIGHEMGWHFADFFSKVAPVSMPVLAAGLVTCVLLEKLRWFGYGTLLPDNVRQVLANYAAEDDAQRTSRQRAALLVQGLAALILIVALALHVAEVGLIGLLVIVLITAFTGITDEHRLGNAFKDAMPFTALLVVFFAVVAVIHQQQLFTPLIQWVLALPADQQPGMLFIANGLLSAISDNVFVATIYITEVKQAFISGQMSREHFETLAIAINTGTNLPSVATPNGQAAFLFLLTSAIAPLVRLSYGRMVWMALPYTVVMGLLGWYAVSYWL</sequence>
<gene>
    <name evidence="1" type="primary">nhaB</name>
    <name type="ordered locus">PFL_3141</name>
</gene>
<protein>
    <recommendedName>
        <fullName evidence="1">Na(+)/H(+) antiporter NhaB</fullName>
    </recommendedName>
    <alternativeName>
        <fullName evidence="1">Sodium/proton antiporter NhaB</fullName>
    </alternativeName>
</protein>
<proteinExistence type="inferred from homology"/>
<dbReference type="EMBL" id="CP000076">
    <property type="protein sequence ID" value="AAY92411.1"/>
    <property type="molecule type" value="Genomic_DNA"/>
</dbReference>
<dbReference type="RefSeq" id="WP_011061428.1">
    <property type="nucleotide sequence ID" value="NC_004129.6"/>
</dbReference>
<dbReference type="SMR" id="Q4KBY6"/>
<dbReference type="STRING" id="220664.PFL_3141"/>
<dbReference type="KEGG" id="pfl:PFL_3141"/>
<dbReference type="PATRIC" id="fig|220664.5.peg.3203"/>
<dbReference type="eggNOG" id="COG3067">
    <property type="taxonomic scope" value="Bacteria"/>
</dbReference>
<dbReference type="HOGENOM" id="CLU_041110_0_0_6"/>
<dbReference type="Proteomes" id="UP000008540">
    <property type="component" value="Chromosome"/>
</dbReference>
<dbReference type="GO" id="GO:0005886">
    <property type="term" value="C:plasma membrane"/>
    <property type="evidence" value="ECO:0007669"/>
    <property type="project" value="UniProtKB-SubCell"/>
</dbReference>
<dbReference type="GO" id="GO:0015385">
    <property type="term" value="F:sodium:proton antiporter activity"/>
    <property type="evidence" value="ECO:0007669"/>
    <property type="project" value="InterPro"/>
</dbReference>
<dbReference type="HAMAP" id="MF_01599">
    <property type="entry name" value="NhaB"/>
    <property type="match status" value="1"/>
</dbReference>
<dbReference type="InterPro" id="IPR004671">
    <property type="entry name" value="Na+/H+_antiporter_NhaB"/>
</dbReference>
<dbReference type="NCBIfam" id="NF007093">
    <property type="entry name" value="PRK09547.1"/>
    <property type="match status" value="1"/>
</dbReference>
<dbReference type="PANTHER" id="PTHR43302:SF1">
    <property type="entry name" value="NA(+)_H(+) ANTIPORTER NHAB"/>
    <property type="match status" value="1"/>
</dbReference>
<dbReference type="PANTHER" id="PTHR43302">
    <property type="entry name" value="TRANSPORTER ARSB-RELATED"/>
    <property type="match status" value="1"/>
</dbReference>
<dbReference type="Pfam" id="PF06450">
    <property type="entry name" value="NhaB"/>
    <property type="match status" value="1"/>
</dbReference>